<reference key="1">
    <citation type="journal article" date="2009" name="Nature">
        <title>Evolution of pathogenicity and sexual reproduction in eight Candida genomes.</title>
        <authorList>
            <person name="Butler G."/>
            <person name="Rasmussen M.D."/>
            <person name="Lin M.F."/>
            <person name="Santos M.A.S."/>
            <person name="Sakthikumar S."/>
            <person name="Munro C.A."/>
            <person name="Rheinbay E."/>
            <person name="Grabherr M."/>
            <person name="Forche A."/>
            <person name="Reedy J.L."/>
            <person name="Agrafioti I."/>
            <person name="Arnaud M.B."/>
            <person name="Bates S."/>
            <person name="Brown A.J.P."/>
            <person name="Brunke S."/>
            <person name="Costanzo M.C."/>
            <person name="Fitzpatrick D.A."/>
            <person name="de Groot P.W.J."/>
            <person name="Harris D."/>
            <person name="Hoyer L.L."/>
            <person name="Hube B."/>
            <person name="Klis F.M."/>
            <person name="Kodira C."/>
            <person name="Lennard N."/>
            <person name="Logue M.E."/>
            <person name="Martin R."/>
            <person name="Neiman A.M."/>
            <person name="Nikolaou E."/>
            <person name="Quail M.A."/>
            <person name="Quinn J."/>
            <person name="Santos M.C."/>
            <person name="Schmitzberger F.F."/>
            <person name="Sherlock G."/>
            <person name="Shah P."/>
            <person name="Silverstein K.A.T."/>
            <person name="Skrzypek M.S."/>
            <person name="Soll D."/>
            <person name="Staggs R."/>
            <person name="Stansfield I."/>
            <person name="Stumpf M.P.H."/>
            <person name="Sudbery P.E."/>
            <person name="Srikantha T."/>
            <person name="Zeng Q."/>
            <person name="Berman J."/>
            <person name="Berriman M."/>
            <person name="Heitman J."/>
            <person name="Gow N.A.R."/>
            <person name="Lorenz M.C."/>
            <person name="Birren B.W."/>
            <person name="Kellis M."/>
            <person name="Cuomo C.A."/>
        </authorList>
    </citation>
    <scope>NUCLEOTIDE SEQUENCE [LARGE SCALE GENOMIC DNA]</scope>
    <source>
        <strain>WO-1</strain>
    </source>
</reference>
<comment type="function">
    <text evidence="1">Catalyzes the radical-mediated insertion of two sulfur atoms into the C-6 and C-8 positions of the octanoyl moiety bound to the lipoyl domains of lipoate-dependent enzymes, thereby converting the octanoylated domains into lipoylated derivatives.</text>
</comment>
<comment type="catalytic activity">
    <reaction evidence="1">
        <text>[[Fe-S] cluster scaffold protein carrying a second [4Fe-4S](2+) cluster] + N(6)-octanoyl-L-lysyl-[protein] + 2 oxidized [2Fe-2S]-[ferredoxin] + 2 S-adenosyl-L-methionine + 4 H(+) = [[Fe-S] cluster scaffold protein] + N(6)-[(R)-dihydrolipoyl]-L-lysyl-[protein] + 4 Fe(3+) + 2 hydrogen sulfide + 2 5'-deoxyadenosine + 2 L-methionine + 2 reduced [2Fe-2S]-[ferredoxin]</text>
        <dbReference type="Rhea" id="RHEA:16585"/>
        <dbReference type="Rhea" id="RHEA-COMP:9928"/>
        <dbReference type="Rhea" id="RHEA-COMP:10000"/>
        <dbReference type="Rhea" id="RHEA-COMP:10001"/>
        <dbReference type="Rhea" id="RHEA-COMP:10475"/>
        <dbReference type="Rhea" id="RHEA-COMP:14568"/>
        <dbReference type="Rhea" id="RHEA-COMP:14569"/>
        <dbReference type="ChEBI" id="CHEBI:15378"/>
        <dbReference type="ChEBI" id="CHEBI:17319"/>
        <dbReference type="ChEBI" id="CHEBI:29034"/>
        <dbReference type="ChEBI" id="CHEBI:29919"/>
        <dbReference type="ChEBI" id="CHEBI:33722"/>
        <dbReference type="ChEBI" id="CHEBI:33737"/>
        <dbReference type="ChEBI" id="CHEBI:33738"/>
        <dbReference type="ChEBI" id="CHEBI:57844"/>
        <dbReference type="ChEBI" id="CHEBI:59789"/>
        <dbReference type="ChEBI" id="CHEBI:78809"/>
        <dbReference type="ChEBI" id="CHEBI:83100"/>
        <dbReference type="EC" id="2.8.1.8"/>
    </reaction>
</comment>
<comment type="cofactor">
    <cofactor evidence="1">
        <name>[4Fe-4S] cluster</name>
        <dbReference type="ChEBI" id="CHEBI:49883"/>
    </cofactor>
    <text evidence="1">Binds 2 [4Fe-4S] clusters per subunit. One cluster is coordinated with 3 cysteines and an exchangeable S-adenosyl-L-methionine.</text>
</comment>
<comment type="pathway">
    <text evidence="1">Protein modification; protein lipoylation via endogenous pathway; protein N(6)-(lipoyl)lysine from octanoyl-[acyl-carrier-protein]: step 2/2.</text>
</comment>
<comment type="subcellular location">
    <subcellularLocation>
        <location evidence="1">Mitochondrion</location>
    </subcellularLocation>
</comment>
<comment type="similarity">
    <text evidence="1">Belongs to the radical SAM superfamily. Lipoyl synthase family.</text>
</comment>
<name>LIPA_CANAW</name>
<organism>
    <name type="scientific">Candida albicans (strain WO-1)</name>
    <name type="common">Yeast</name>
    <dbReference type="NCBI Taxonomy" id="294748"/>
    <lineage>
        <taxon>Eukaryota</taxon>
        <taxon>Fungi</taxon>
        <taxon>Dikarya</taxon>
        <taxon>Ascomycota</taxon>
        <taxon>Saccharomycotina</taxon>
        <taxon>Pichiomycetes</taxon>
        <taxon>Debaryomycetaceae</taxon>
        <taxon>Candida/Lodderomyces clade</taxon>
        <taxon>Candida</taxon>
    </lineage>
</organism>
<feature type="transit peptide" description="Mitochondrion" evidence="1">
    <location>
        <begin position="1"/>
        <end position="21"/>
    </location>
</feature>
<feature type="chain" id="PRO_0000398257" description="Lipoyl synthase, mitochondrial">
    <location>
        <begin position="22"/>
        <end position="386"/>
    </location>
</feature>
<feature type="domain" description="Radical SAM core" evidence="2">
    <location>
        <begin position="122"/>
        <end position="341"/>
    </location>
</feature>
<feature type="binding site" evidence="1">
    <location>
        <position position="107"/>
    </location>
    <ligand>
        <name>[4Fe-4S] cluster</name>
        <dbReference type="ChEBI" id="CHEBI:49883"/>
        <label>1</label>
    </ligand>
</feature>
<feature type="binding site" evidence="1">
    <location>
        <position position="112"/>
    </location>
    <ligand>
        <name>[4Fe-4S] cluster</name>
        <dbReference type="ChEBI" id="CHEBI:49883"/>
        <label>1</label>
    </ligand>
</feature>
<feature type="binding site" evidence="1">
    <location>
        <position position="118"/>
    </location>
    <ligand>
        <name>[4Fe-4S] cluster</name>
        <dbReference type="ChEBI" id="CHEBI:49883"/>
        <label>1</label>
    </ligand>
</feature>
<feature type="binding site" evidence="1">
    <location>
        <position position="137"/>
    </location>
    <ligand>
        <name>[4Fe-4S] cluster</name>
        <dbReference type="ChEBI" id="CHEBI:49883"/>
        <label>2</label>
        <note>4Fe-4S-S-AdoMet</note>
    </ligand>
</feature>
<feature type="binding site" evidence="1">
    <location>
        <position position="141"/>
    </location>
    <ligand>
        <name>[4Fe-4S] cluster</name>
        <dbReference type="ChEBI" id="CHEBI:49883"/>
        <label>2</label>
        <note>4Fe-4S-S-AdoMet</note>
    </ligand>
</feature>
<feature type="binding site" evidence="1">
    <location>
        <position position="144"/>
    </location>
    <ligand>
        <name>[4Fe-4S] cluster</name>
        <dbReference type="ChEBI" id="CHEBI:49883"/>
        <label>2</label>
        <note>4Fe-4S-S-AdoMet</note>
    </ligand>
</feature>
<feature type="binding site" evidence="1">
    <location>
        <position position="352"/>
    </location>
    <ligand>
        <name>[4Fe-4S] cluster</name>
        <dbReference type="ChEBI" id="CHEBI:49883"/>
        <label>1</label>
    </ligand>
</feature>
<proteinExistence type="inferred from homology"/>
<accession>P0CH68</accession>
<accession>C4YHL7</accession>
<accession>Q5AF33</accession>
<keyword id="KW-0004">4Fe-4S</keyword>
<keyword id="KW-0408">Iron</keyword>
<keyword id="KW-0411">Iron-sulfur</keyword>
<keyword id="KW-0479">Metal-binding</keyword>
<keyword id="KW-0496">Mitochondrion</keyword>
<keyword id="KW-0949">S-adenosyl-L-methionine</keyword>
<keyword id="KW-0808">Transferase</keyword>
<keyword id="KW-0809">Transit peptide</keyword>
<evidence type="ECO:0000255" key="1">
    <source>
        <dbReference type="HAMAP-Rule" id="MF_03123"/>
    </source>
</evidence>
<evidence type="ECO:0000255" key="2">
    <source>
        <dbReference type="PROSITE-ProRule" id="PRU01266"/>
    </source>
</evidence>
<dbReference type="EC" id="2.8.1.8" evidence="1"/>
<dbReference type="EMBL" id="CH672349">
    <property type="protein sequence ID" value="EEQ45249.1"/>
    <property type="molecule type" value="Genomic_DNA"/>
</dbReference>
<dbReference type="SMR" id="P0CH68"/>
<dbReference type="PaxDb" id="5476-P0CH68"/>
<dbReference type="VEuPathDB" id="FungiDB:CAWG_03565"/>
<dbReference type="HOGENOM" id="CLU_033144_2_0_1"/>
<dbReference type="OMA" id="PYCDIDF"/>
<dbReference type="OrthoDB" id="9569at766764"/>
<dbReference type="UniPathway" id="UPA00538">
    <property type="reaction ID" value="UER00593"/>
</dbReference>
<dbReference type="Proteomes" id="UP000001429">
    <property type="component" value="Chromosome 4, Supercontig 1.4"/>
</dbReference>
<dbReference type="GO" id="GO:0005739">
    <property type="term" value="C:mitochondrion"/>
    <property type="evidence" value="ECO:0007669"/>
    <property type="project" value="UniProtKB-SubCell"/>
</dbReference>
<dbReference type="GO" id="GO:0051539">
    <property type="term" value="F:4 iron, 4 sulfur cluster binding"/>
    <property type="evidence" value="ECO:0007669"/>
    <property type="project" value="UniProtKB-UniRule"/>
</dbReference>
<dbReference type="GO" id="GO:0016992">
    <property type="term" value="F:lipoate synthase activity"/>
    <property type="evidence" value="ECO:0007669"/>
    <property type="project" value="UniProtKB-UniRule"/>
</dbReference>
<dbReference type="GO" id="GO:0046872">
    <property type="term" value="F:metal ion binding"/>
    <property type="evidence" value="ECO:0007669"/>
    <property type="project" value="UniProtKB-KW"/>
</dbReference>
<dbReference type="CDD" id="cd01335">
    <property type="entry name" value="Radical_SAM"/>
    <property type="match status" value="1"/>
</dbReference>
<dbReference type="FunFam" id="3.20.20.70:FF:000036">
    <property type="entry name" value="Lipoyl synthase, mitochondrial"/>
    <property type="match status" value="1"/>
</dbReference>
<dbReference type="Gene3D" id="3.20.20.70">
    <property type="entry name" value="Aldolase class I"/>
    <property type="match status" value="1"/>
</dbReference>
<dbReference type="HAMAP" id="MF_00206">
    <property type="entry name" value="Lipoyl_synth"/>
    <property type="match status" value="1"/>
</dbReference>
<dbReference type="InterPro" id="IPR013785">
    <property type="entry name" value="Aldolase_TIM"/>
</dbReference>
<dbReference type="InterPro" id="IPR006638">
    <property type="entry name" value="Elp3/MiaA/NifB-like_rSAM"/>
</dbReference>
<dbReference type="InterPro" id="IPR031691">
    <property type="entry name" value="LIAS_N"/>
</dbReference>
<dbReference type="InterPro" id="IPR003698">
    <property type="entry name" value="Lipoyl_synth"/>
</dbReference>
<dbReference type="InterPro" id="IPR007197">
    <property type="entry name" value="rSAM"/>
</dbReference>
<dbReference type="NCBIfam" id="TIGR00510">
    <property type="entry name" value="lipA"/>
    <property type="match status" value="1"/>
</dbReference>
<dbReference type="NCBIfam" id="NF004019">
    <property type="entry name" value="PRK05481.1"/>
    <property type="match status" value="1"/>
</dbReference>
<dbReference type="NCBIfam" id="NF009544">
    <property type="entry name" value="PRK12928.1"/>
    <property type="match status" value="1"/>
</dbReference>
<dbReference type="PANTHER" id="PTHR10949">
    <property type="entry name" value="LIPOYL SYNTHASE"/>
    <property type="match status" value="1"/>
</dbReference>
<dbReference type="PANTHER" id="PTHR10949:SF0">
    <property type="entry name" value="LIPOYL SYNTHASE, MITOCHONDRIAL"/>
    <property type="match status" value="1"/>
</dbReference>
<dbReference type="Pfam" id="PF16881">
    <property type="entry name" value="LIAS_N"/>
    <property type="match status" value="1"/>
</dbReference>
<dbReference type="Pfam" id="PF04055">
    <property type="entry name" value="Radical_SAM"/>
    <property type="match status" value="1"/>
</dbReference>
<dbReference type="PIRSF" id="PIRSF005963">
    <property type="entry name" value="Lipoyl_synth"/>
    <property type="match status" value="1"/>
</dbReference>
<dbReference type="SFLD" id="SFLDF00271">
    <property type="entry name" value="lipoyl_synthase"/>
    <property type="match status" value="1"/>
</dbReference>
<dbReference type="SFLD" id="SFLDG01058">
    <property type="entry name" value="lipoyl_synthase_like"/>
    <property type="match status" value="1"/>
</dbReference>
<dbReference type="SMART" id="SM00729">
    <property type="entry name" value="Elp3"/>
    <property type="match status" value="1"/>
</dbReference>
<dbReference type="SUPFAM" id="SSF102114">
    <property type="entry name" value="Radical SAM enzymes"/>
    <property type="match status" value="1"/>
</dbReference>
<dbReference type="PROSITE" id="PS51918">
    <property type="entry name" value="RADICAL_SAM"/>
    <property type="match status" value="1"/>
</dbReference>
<gene>
    <name type="primary">LAB5</name>
    <name type="synonym">LIS1</name>
    <name type="ORF">CAWG_03565</name>
</gene>
<sequence>MISRNSILLRRLYPTTIIRTLATDATESTSVKTKRRRTIFTDELNKGPSFDDFVSGKAKDMLEDPLETARKDPNAKLPSWLKVPIPKGKSFHNVKKDVRELKLATVCEEAKCPNIGECWGGKKSEATATIMLLGDTCTRGCRFCSVKTNRKPAAPDPMEPENTAEAISRWGLGYVVLTTVDRDDLVDGGARHLAETVQKIKQKAPQILVEVLGGDFRGDLSMVEILADSGLDVYAHNLETVEALTPHIRDRRATYRQSLAVLERAKQTNSSLITKTSLMLGFGETDDQVLQTLRDLREIGCDVVTFGQYMRPTKRHMKVVEYIKPEKFDYWRDTALDMGFLYVASGPLVRSSYKAGEAFIENVLKKRKHNVGETPRLAQEIKPSIY</sequence>
<protein>
    <recommendedName>
        <fullName evidence="1">Lipoyl synthase, mitochondrial</fullName>
        <ecNumber evidence="1">2.8.1.8</ecNumber>
    </recommendedName>
    <alternativeName>
        <fullName evidence="1">Lipoate synthase</fullName>
        <shortName evidence="1">LS</shortName>
        <shortName evidence="1">Lip-syn</shortName>
    </alternativeName>
    <alternativeName>
        <fullName evidence="1">Lipoic acid synthase</fullName>
    </alternativeName>
</protein>